<organism>
    <name type="scientific">Zea mays subsp. huehuetenangensis</name>
    <name type="common">San Antonio Huista teosinte</name>
    <dbReference type="NCBI Taxonomy" id="112001"/>
    <lineage>
        <taxon>Eukaryota</taxon>
        <taxon>Viridiplantae</taxon>
        <taxon>Streptophyta</taxon>
        <taxon>Embryophyta</taxon>
        <taxon>Tracheophyta</taxon>
        <taxon>Spermatophyta</taxon>
        <taxon>Magnoliopsida</taxon>
        <taxon>Liliopsida</taxon>
        <taxon>Poales</taxon>
        <taxon>Poaceae</taxon>
        <taxon>PACMAD clade</taxon>
        <taxon>Panicoideae</taxon>
        <taxon>Andropogonodae</taxon>
        <taxon>Andropogoneae</taxon>
        <taxon>Tripsacinae</taxon>
        <taxon>Zea</taxon>
    </lineage>
</organism>
<comment type="function">
    <text evidence="3">Sesquiterpene cyclase catalyzing the production of beta-farnesene and alpha-bergamotene in equal amounts from farnesyl diphosphate. Involved in indirect defense by producing volatile signals attracting natural enemies of herbivores.</text>
</comment>
<comment type="catalytic activity">
    <reaction evidence="3">
        <text>(2E,6E)-farnesyl diphosphate = (E)-beta-farnesene + diphosphate</text>
        <dbReference type="Rhea" id="RHEA:27425"/>
        <dbReference type="ChEBI" id="CHEBI:10418"/>
        <dbReference type="ChEBI" id="CHEBI:33019"/>
        <dbReference type="ChEBI" id="CHEBI:175763"/>
        <dbReference type="EC" id="4.2.3.47"/>
    </reaction>
</comment>
<comment type="cofactor">
    <cofactor evidence="1">
        <name>Mg(2+)</name>
        <dbReference type="ChEBI" id="CHEBI:18420"/>
    </cofactor>
    <cofactor evidence="1">
        <name>Co(2+)</name>
        <dbReference type="ChEBI" id="CHEBI:48828"/>
    </cofactor>
    <cofactor evidence="1">
        <name>Mn(2+)</name>
        <dbReference type="ChEBI" id="CHEBI:29035"/>
    </cofactor>
</comment>
<comment type="pathway">
    <text>Secondary metabolite biosynthesis; terpenoid biosynthesis.</text>
</comment>
<comment type="subcellular location">
    <subcellularLocation>
        <location evidence="4">Cytoplasm</location>
    </subcellularLocation>
</comment>
<comment type="domain">
    <text>The Asp-Asp-Xaa-Xaa-Asp/Glu (DDXXD/E) motif is important for the catalytic activity, presumably through binding to Mg(2+).</text>
</comment>
<comment type="similarity">
    <text evidence="4">Belongs to the terpene synthase family.</text>
</comment>
<protein>
    <recommendedName>
        <fullName>(E)-beta-farnesene synthase</fullName>
        <ecNumber>4.2.3.47</ecNumber>
    </recommendedName>
    <alternativeName>
        <fullName>Terpene synthase 10</fullName>
    </alternativeName>
</protein>
<name>FARS_ZEAMH</name>
<reference key="1">
    <citation type="journal article" date="2009" name="Phytochemistry">
        <title>Molecular and biochemical evolution of maize terpene synthase 10, an enzyme of indirect defense.</title>
        <authorList>
            <person name="Koellner T.G."/>
            <person name="Gershenzon J."/>
            <person name="Degenhardt J."/>
        </authorList>
    </citation>
    <scope>NUCLEOTIDE SEQUENCE [MRNA]</scope>
    <scope>FUNCTION</scope>
    <scope>CATALYTIC ACTIVITY</scope>
</reference>
<proteinExistence type="evidence at protein level"/>
<feature type="chain" id="PRO_0000402131" description="(E)-beta-farnesene synthase">
    <location>
        <begin position="1"/>
        <end position="533"/>
    </location>
</feature>
<feature type="short sequence motif" description="DDXXD motif">
    <location>
        <begin position="286"/>
        <end position="290"/>
    </location>
</feature>
<feature type="binding site" evidence="2">
    <location>
        <position position="286"/>
    </location>
    <ligand>
        <name>Mg(2+)</name>
        <dbReference type="ChEBI" id="CHEBI:18420"/>
        <label>1</label>
    </ligand>
</feature>
<feature type="binding site" evidence="2">
    <location>
        <position position="286"/>
    </location>
    <ligand>
        <name>Mg(2+)</name>
        <dbReference type="ChEBI" id="CHEBI:18420"/>
        <label>2</label>
    </ligand>
</feature>
<feature type="binding site" evidence="2">
    <location>
        <position position="290"/>
    </location>
    <ligand>
        <name>Mg(2+)</name>
        <dbReference type="ChEBI" id="CHEBI:18420"/>
        <label>1</label>
    </ligand>
</feature>
<feature type="binding site" evidence="2">
    <location>
        <position position="290"/>
    </location>
    <ligand>
        <name>Mg(2+)</name>
        <dbReference type="ChEBI" id="CHEBI:18420"/>
        <label>2</label>
    </ligand>
</feature>
<feature type="binding site" evidence="2">
    <location>
        <position position="430"/>
    </location>
    <ligand>
        <name>Mg(2+)</name>
        <dbReference type="ChEBI" id="CHEBI:18420"/>
        <label>3</label>
    </ligand>
</feature>
<feature type="binding site" evidence="2">
    <location>
        <position position="434"/>
    </location>
    <ligand>
        <name>Mg(2+)</name>
        <dbReference type="ChEBI" id="CHEBI:18420"/>
        <label>3</label>
    </ligand>
</feature>
<feature type="binding site" evidence="2">
    <location>
        <position position="438"/>
    </location>
    <ligand>
        <name>Mg(2+)</name>
        <dbReference type="ChEBI" id="CHEBI:18420"/>
        <label>3</label>
    </ligand>
</feature>
<dbReference type="EC" id="4.2.3.47"/>
<dbReference type="EMBL" id="GQ253105">
    <property type="protein sequence ID" value="ACT37404.1"/>
    <property type="molecule type" value="mRNA"/>
</dbReference>
<dbReference type="SMR" id="C7E5V8"/>
<dbReference type="BRENDA" id="4.2.3.47">
    <property type="organism ID" value="6752"/>
</dbReference>
<dbReference type="UniPathway" id="UPA00213"/>
<dbReference type="GO" id="GO:0005737">
    <property type="term" value="C:cytoplasm"/>
    <property type="evidence" value="ECO:0007669"/>
    <property type="project" value="UniProtKB-SubCell"/>
</dbReference>
<dbReference type="GO" id="GO:0000287">
    <property type="term" value="F:magnesium ion binding"/>
    <property type="evidence" value="ECO:0007669"/>
    <property type="project" value="InterPro"/>
</dbReference>
<dbReference type="GO" id="GO:0010333">
    <property type="term" value="F:terpene synthase activity"/>
    <property type="evidence" value="ECO:0007669"/>
    <property type="project" value="InterPro"/>
</dbReference>
<dbReference type="GO" id="GO:0006952">
    <property type="term" value="P:defense response"/>
    <property type="evidence" value="ECO:0007669"/>
    <property type="project" value="UniProtKB-KW"/>
</dbReference>
<dbReference type="GO" id="GO:0016102">
    <property type="term" value="P:diterpenoid biosynthetic process"/>
    <property type="evidence" value="ECO:0007669"/>
    <property type="project" value="InterPro"/>
</dbReference>
<dbReference type="CDD" id="cd00684">
    <property type="entry name" value="Terpene_cyclase_plant_C1"/>
    <property type="match status" value="1"/>
</dbReference>
<dbReference type="FunFam" id="1.10.600.10:FF:000007">
    <property type="entry name" value="Isoprene synthase, chloroplastic"/>
    <property type="match status" value="1"/>
</dbReference>
<dbReference type="Gene3D" id="1.10.600.10">
    <property type="entry name" value="Farnesyl Diphosphate Synthase"/>
    <property type="match status" value="1"/>
</dbReference>
<dbReference type="Gene3D" id="1.50.10.130">
    <property type="entry name" value="Terpene synthase, N-terminal domain"/>
    <property type="match status" value="1"/>
</dbReference>
<dbReference type="InterPro" id="IPR008949">
    <property type="entry name" value="Isoprenoid_synthase_dom_sf"/>
</dbReference>
<dbReference type="InterPro" id="IPR034741">
    <property type="entry name" value="Terpene_cyclase-like_1_C"/>
</dbReference>
<dbReference type="InterPro" id="IPR044814">
    <property type="entry name" value="Terpene_cyclase_plant_C1"/>
</dbReference>
<dbReference type="InterPro" id="IPR001906">
    <property type="entry name" value="Terpene_synth_N"/>
</dbReference>
<dbReference type="InterPro" id="IPR036965">
    <property type="entry name" value="Terpene_synth_N_sf"/>
</dbReference>
<dbReference type="InterPro" id="IPR050148">
    <property type="entry name" value="Terpene_synthase-like"/>
</dbReference>
<dbReference type="InterPro" id="IPR005630">
    <property type="entry name" value="Terpene_synthase_metal-bd"/>
</dbReference>
<dbReference type="InterPro" id="IPR008930">
    <property type="entry name" value="Terpenoid_cyclase/PrenylTrfase"/>
</dbReference>
<dbReference type="PANTHER" id="PTHR31225:SF118">
    <property type="entry name" value="(E)-BETA-FARNESENE SYNTHASE"/>
    <property type="match status" value="1"/>
</dbReference>
<dbReference type="PANTHER" id="PTHR31225">
    <property type="entry name" value="OS04G0344100 PROTEIN-RELATED"/>
    <property type="match status" value="1"/>
</dbReference>
<dbReference type="Pfam" id="PF01397">
    <property type="entry name" value="Terpene_synth"/>
    <property type="match status" value="1"/>
</dbReference>
<dbReference type="Pfam" id="PF03936">
    <property type="entry name" value="Terpene_synth_C"/>
    <property type="match status" value="1"/>
</dbReference>
<dbReference type="SFLD" id="SFLDS00005">
    <property type="entry name" value="Isoprenoid_Synthase_Type_I"/>
    <property type="match status" value="1"/>
</dbReference>
<dbReference type="SFLD" id="SFLDG01019">
    <property type="entry name" value="Terpene_Cyclase_Like_1_C_Termi"/>
    <property type="match status" value="1"/>
</dbReference>
<dbReference type="SUPFAM" id="SSF48239">
    <property type="entry name" value="Terpenoid cyclases/Protein prenyltransferases"/>
    <property type="match status" value="1"/>
</dbReference>
<dbReference type="SUPFAM" id="SSF48576">
    <property type="entry name" value="Terpenoid synthases"/>
    <property type="match status" value="1"/>
</dbReference>
<keyword id="KW-0963">Cytoplasm</keyword>
<keyword id="KW-0456">Lyase</keyword>
<keyword id="KW-0460">Magnesium</keyword>
<keyword id="KW-0464">Manganese</keyword>
<keyword id="KW-0479">Metal-binding</keyword>
<keyword id="KW-0611">Plant defense</keyword>
<sequence length="533" mass="61432">MDATAFHPSLWGDFFVKYKPPTAPKRGHMTERAELLKEEVRKTLKAAANQIKNALDLIITLQRLGLDHHYENEISELLRFVYSSSDYDDKDLYVVSLRFYLLRKHGHCVSSDVFTSFKDEEGNFVVDDTKCLLSLYNAAYFRTHGEKVLDEAIAFTRRQLEASLLDPLEPALADEVHLTLQTPLFRRLRILEAINYIPIYGKEAGRNEAILELAKLNFNLAQLIYCGELKEVTLWWKQLNVETNLSFIRDRIVECHFWMTGACCEPQYSLSRVIATKMTALITVLDDMMDTYSTTEEAMLLAEAIYRWEENAAELLPGYMKDFYLYLLKTIDSCGDELGPNRSFRTFYLKEMLKVLVRGSSQEIKWRNENYVPKTISEHLEHSGPTVGAFQVACSSFVGMGDIITKESFEWLLTYPELVKSLMNIARLLNDTASTKREQNAGQHVSTVQCYMLKHGTTMDEACEKVKELTEDSWKDMMELYLTPTEHPKLIAQTIVDFARTADYMYKETDGFTFSHTIKDMIAKLFVDPISLF</sequence>
<evidence type="ECO:0000250" key="1"/>
<evidence type="ECO:0000250" key="2">
    <source>
        <dbReference type="UniProtKB" id="Q40577"/>
    </source>
</evidence>
<evidence type="ECO:0000269" key="3">
    <source>
    </source>
</evidence>
<evidence type="ECO:0000305" key="4"/>
<accession>C7E5V8</accession>